<gene>
    <name evidence="1" type="primary">DRE2</name>
    <name type="ordered locus">CAGL0G01947g</name>
</gene>
<reference key="1">
    <citation type="journal article" date="2004" name="Nature">
        <title>Genome evolution in yeasts.</title>
        <authorList>
            <person name="Dujon B."/>
            <person name="Sherman D."/>
            <person name="Fischer G."/>
            <person name="Durrens P."/>
            <person name="Casaregola S."/>
            <person name="Lafontaine I."/>
            <person name="de Montigny J."/>
            <person name="Marck C."/>
            <person name="Neuveglise C."/>
            <person name="Talla E."/>
            <person name="Goffard N."/>
            <person name="Frangeul L."/>
            <person name="Aigle M."/>
            <person name="Anthouard V."/>
            <person name="Babour A."/>
            <person name="Barbe V."/>
            <person name="Barnay S."/>
            <person name="Blanchin S."/>
            <person name="Beckerich J.-M."/>
            <person name="Beyne E."/>
            <person name="Bleykasten C."/>
            <person name="Boisrame A."/>
            <person name="Boyer J."/>
            <person name="Cattolico L."/>
            <person name="Confanioleri F."/>
            <person name="de Daruvar A."/>
            <person name="Despons L."/>
            <person name="Fabre E."/>
            <person name="Fairhead C."/>
            <person name="Ferry-Dumazet H."/>
            <person name="Groppi A."/>
            <person name="Hantraye F."/>
            <person name="Hennequin C."/>
            <person name="Jauniaux N."/>
            <person name="Joyet P."/>
            <person name="Kachouri R."/>
            <person name="Kerrest A."/>
            <person name="Koszul R."/>
            <person name="Lemaire M."/>
            <person name="Lesur I."/>
            <person name="Ma L."/>
            <person name="Muller H."/>
            <person name="Nicaud J.-M."/>
            <person name="Nikolski M."/>
            <person name="Oztas S."/>
            <person name="Ozier-Kalogeropoulos O."/>
            <person name="Pellenz S."/>
            <person name="Potier S."/>
            <person name="Richard G.-F."/>
            <person name="Straub M.-L."/>
            <person name="Suleau A."/>
            <person name="Swennen D."/>
            <person name="Tekaia F."/>
            <person name="Wesolowski-Louvel M."/>
            <person name="Westhof E."/>
            <person name="Wirth B."/>
            <person name="Zeniou-Meyer M."/>
            <person name="Zivanovic Y."/>
            <person name="Bolotin-Fukuhara M."/>
            <person name="Thierry A."/>
            <person name="Bouchier C."/>
            <person name="Caudron B."/>
            <person name="Scarpelli C."/>
            <person name="Gaillardin C."/>
            <person name="Weissenbach J."/>
            <person name="Wincker P."/>
            <person name="Souciet J.-L."/>
        </authorList>
    </citation>
    <scope>NUCLEOTIDE SEQUENCE [LARGE SCALE GENOMIC DNA]</scope>
    <source>
        <strain>ATCC 2001 / BCRC 20586 / JCM 3761 / NBRC 0622 / NRRL Y-65 / CBS 138</strain>
    </source>
</reference>
<organism>
    <name type="scientific">Candida glabrata (strain ATCC 2001 / BCRC 20586 / JCM 3761 / NBRC 0622 / NRRL Y-65 / CBS 138)</name>
    <name type="common">Yeast</name>
    <name type="synonym">Nakaseomyces glabratus</name>
    <dbReference type="NCBI Taxonomy" id="284593"/>
    <lineage>
        <taxon>Eukaryota</taxon>
        <taxon>Fungi</taxon>
        <taxon>Dikarya</taxon>
        <taxon>Ascomycota</taxon>
        <taxon>Saccharomycotina</taxon>
        <taxon>Saccharomycetes</taxon>
        <taxon>Saccharomycetales</taxon>
        <taxon>Saccharomycetaceae</taxon>
        <taxon>Nakaseomyces</taxon>
    </lineage>
</organism>
<keyword id="KW-0001">2Fe-2S</keyword>
<keyword id="KW-0004">4Fe-4S</keyword>
<keyword id="KW-0963">Cytoplasm</keyword>
<keyword id="KW-0408">Iron</keyword>
<keyword id="KW-0411">Iron-sulfur</keyword>
<keyword id="KW-0479">Metal-binding</keyword>
<keyword id="KW-0496">Mitochondrion</keyword>
<keyword id="KW-1185">Reference proteome</keyword>
<dbReference type="EMBL" id="CR380953">
    <property type="protein sequence ID" value="CAG59373.1"/>
    <property type="molecule type" value="Genomic_DNA"/>
</dbReference>
<dbReference type="RefSeq" id="XP_446446.1">
    <property type="nucleotide sequence ID" value="XM_446446.1"/>
</dbReference>
<dbReference type="SMR" id="Q6FTJ8"/>
<dbReference type="FunCoup" id="Q6FTJ8">
    <property type="interactions" value="185"/>
</dbReference>
<dbReference type="STRING" id="284593.Q6FTJ8"/>
<dbReference type="EnsemblFungi" id="CAGL0G01947g-T">
    <property type="protein sequence ID" value="CAGL0G01947g-T-p1"/>
    <property type="gene ID" value="CAGL0G01947g"/>
</dbReference>
<dbReference type="KEGG" id="cgr:2888420"/>
<dbReference type="CGD" id="CAL0130709">
    <property type="gene designation" value="CAGL0G01947g"/>
</dbReference>
<dbReference type="VEuPathDB" id="FungiDB:CAGL0G01947g"/>
<dbReference type="eggNOG" id="KOG4020">
    <property type="taxonomic scope" value="Eukaryota"/>
</dbReference>
<dbReference type="HOGENOM" id="CLU_067152_0_0_1"/>
<dbReference type="InParanoid" id="Q6FTJ8"/>
<dbReference type="Proteomes" id="UP000002428">
    <property type="component" value="Chromosome G"/>
</dbReference>
<dbReference type="GO" id="GO:0097361">
    <property type="term" value="C:cytosolic [4Fe-4S] assembly targeting complex"/>
    <property type="evidence" value="ECO:0007669"/>
    <property type="project" value="EnsemblFungi"/>
</dbReference>
<dbReference type="GO" id="GO:0005758">
    <property type="term" value="C:mitochondrial intermembrane space"/>
    <property type="evidence" value="ECO:0007669"/>
    <property type="project" value="UniProtKB-SubCell"/>
</dbReference>
<dbReference type="GO" id="GO:0051537">
    <property type="term" value="F:2 iron, 2 sulfur cluster binding"/>
    <property type="evidence" value="ECO:0007669"/>
    <property type="project" value="UniProtKB-UniRule"/>
</dbReference>
<dbReference type="GO" id="GO:0051539">
    <property type="term" value="F:4 iron, 4 sulfur cluster binding"/>
    <property type="evidence" value="ECO:0007669"/>
    <property type="project" value="UniProtKB-KW"/>
</dbReference>
<dbReference type="GO" id="GO:0009055">
    <property type="term" value="F:electron transfer activity"/>
    <property type="evidence" value="ECO:0007669"/>
    <property type="project" value="UniProtKB-UniRule"/>
</dbReference>
<dbReference type="GO" id="GO:0046872">
    <property type="term" value="F:metal ion binding"/>
    <property type="evidence" value="ECO:0007669"/>
    <property type="project" value="UniProtKB-KW"/>
</dbReference>
<dbReference type="GO" id="GO:0034599">
    <property type="term" value="P:cellular response to oxidative stress"/>
    <property type="evidence" value="ECO:0007669"/>
    <property type="project" value="EnsemblFungi"/>
</dbReference>
<dbReference type="GO" id="GO:0016226">
    <property type="term" value="P:iron-sulfur cluster assembly"/>
    <property type="evidence" value="ECO:0007669"/>
    <property type="project" value="UniProtKB-UniRule"/>
</dbReference>
<dbReference type="GO" id="GO:1901299">
    <property type="term" value="P:negative regulation of hydrogen peroxide-mediated programmed cell death"/>
    <property type="evidence" value="ECO:0007669"/>
    <property type="project" value="EnsemblFungi"/>
</dbReference>
<dbReference type="GO" id="GO:0045019">
    <property type="term" value="P:negative regulation of nitric oxide biosynthetic process"/>
    <property type="evidence" value="ECO:0007669"/>
    <property type="project" value="EnsemblFungi"/>
</dbReference>
<dbReference type="Gene3D" id="3.40.50.11000">
    <property type="entry name" value="Fe-S cluster assembly protein Dre2, N-terminal domain"/>
    <property type="match status" value="1"/>
</dbReference>
<dbReference type="HAMAP" id="MF_03115">
    <property type="entry name" value="Anamorsin"/>
    <property type="match status" value="1"/>
</dbReference>
<dbReference type="InterPro" id="IPR007785">
    <property type="entry name" value="Anamorsin"/>
</dbReference>
<dbReference type="InterPro" id="IPR046408">
    <property type="entry name" value="CIAPIN1"/>
</dbReference>
<dbReference type="InterPro" id="IPR031838">
    <property type="entry name" value="Dre2_N"/>
</dbReference>
<dbReference type="PANTHER" id="PTHR13273">
    <property type="entry name" value="ANAMORSIN"/>
    <property type="match status" value="1"/>
</dbReference>
<dbReference type="PANTHER" id="PTHR13273:SF14">
    <property type="entry name" value="ANAMORSIN"/>
    <property type="match status" value="1"/>
</dbReference>
<dbReference type="Pfam" id="PF05093">
    <property type="entry name" value="CIAPIN1"/>
    <property type="match status" value="1"/>
</dbReference>
<dbReference type="Pfam" id="PF16803">
    <property type="entry name" value="DRE2_N"/>
    <property type="match status" value="1"/>
</dbReference>
<comment type="function">
    <text evidence="1">Component of the cytosolic iron-sulfur (Fe-S) protein assembly (CIA) machinery required for the maturation of extramitochondrial Fe-S proteins. Part of an electron transfer chain functioning in an early step of cytosolic Fe-S biogenesis, facilitating the de novo assembly of a [4Fe-4S] cluster on the scaffold complex CFD1-NBP35. Electrons are transferred to DRE2 from NADPH via the FAD- and FMN-containing protein TAH18. TAH18-DRE2 are also required for the assembly of the diferric tyrosyl radical cofactor of ribonucleotide reductase (RNR), probably by providing electrons for reduction during radical cofactor maturation in the catalytic small subunit RNR2.</text>
</comment>
<comment type="cofactor">
    <cofactor evidence="1">
        <name>[2Fe-2S] cluster</name>
        <dbReference type="ChEBI" id="CHEBI:190135"/>
    </cofactor>
</comment>
<comment type="cofactor">
    <cofactor evidence="1">
        <name>[4Fe-4S] cluster</name>
        <dbReference type="ChEBI" id="CHEBI:49883"/>
    </cofactor>
</comment>
<comment type="subunit">
    <text evidence="1">Monomer. Interacts with TAH18. Interacts with MIA40.</text>
</comment>
<comment type="subcellular location">
    <subcellularLocation>
        <location evidence="1">Cytoplasm</location>
    </subcellularLocation>
    <subcellularLocation>
        <location evidence="1">Mitochondrion intermembrane space</location>
    </subcellularLocation>
</comment>
<comment type="domain">
    <text evidence="1">The C-terminal domain binds 2 Fe-S clusters but is otherwise mostly in an intrinsically disordered conformation.</text>
</comment>
<comment type="domain">
    <text evidence="1">The N-terminal domain has structural similarity with S-adenosyl-L-methionine-dependent methyltransferases, but does not bind S-adenosyl-L-methionine. It is required for correct assembly of the 2 Fe-S clusters.</text>
</comment>
<comment type="domain">
    <text evidence="1">The twin Cx2C motifs are involved in the recognition by the mitochondrial MIA40-ERV1 disulfide relay system. The formation of 2 disulfide bonds in the Cx2C motifs through dithiol/disulfide exchange reactions effectively traps the protein in the mitochondrial intermembrane space.</text>
</comment>
<comment type="similarity">
    <text evidence="1">Belongs to the anamorsin family.</text>
</comment>
<evidence type="ECO:0000255" key="1">
    <source>
        <dbReference type="HAMAP-Rule" id="MF_03115"/>
    </source>
</evidence>
<evidence type="ECO:0000256" key="2">
    <source>
        <dbReference type="SAM" id="MobiDB-lite"/>
    </source>
</evidence>
<accession>Q6FTJ8</accession>
<sequence>MAKSGLLLIHPAITTTPEEVEKAKADAVAADVKIANQFLINKVNEGSVKLQKGIYDVIYYLTPEAPDAILFPKKLIGALNEALKVGGVLYGLSDKYKIDALVNDFDIVSDSGKYHWVKKVNMAVKAEPVAVPLKKSEKSEPSKTLPSFKKAGESKLPSFKKAANKPLPTFKKKVEEAKPKVEARVHKAENDDDELEDEEDENLFDASRSKYFDEDDSESLDEDDLLNEEDAKNIGGITMITCGKSKTKKKKACKDCSCGIKEEEEAEIDNIRSQQDTVVKFTEDELTEIDFTIDGKKVGGCGSCSLGDAFRCTGCPYLGLPAFKPGEPINLDSITDDL</sequence>
<proteinExistence type="inferred from homology"/>
<feature type="chain" id="PRO_0000324860" description="Fe-S cluster assembly protein DRE2">
    <location>
        <begin position="1"/>
        <end position="338"/>
    </location>
</feature>
<feature type="region of interest" description="N-terminal SAM-like domain" evidence="1">
    <location>
        <begin position="1"/>
        <end position="165"/>
    </location>
</feature>
<feature type="region of interest" description="Linker" evidence="1">
    <location>
        <begin position="166"/>
        <end position="232"/>
    </location>
</feature>
<feature type="region of interest" description="Disordered" evidence="2">
    <location>
        <begin position="181"/>
        <end position="223"/>
    </location>
</feature>
<feature type="region of interest" description="Fe-S binding site A" evidence="1">
    <location>
        <begin position="242"/>
        <end position="258"/>
    </location>
</feature>
<feature type="region of interest" description="Fe-S binding site B" evidence="1">
    <location>
        <begin position="301"/>
        <end position="315"/>
    </location>
</feature>
<feature type="short sequence motif" description="Cx2C motif 1" evidence="1">
    <location>
        <begin position="301"/>
        <end position="304"/>
    </location>
</feature>
<feature type="short sequence motif" description="Cx2C motif 2" evidence="1">
    <location>
        <begin position="312"/>
        <end position="315"/>
    </location>
</feature>
<feature type="compositionally biased region" description="Acidic residues" evidence="2">
    <location>
        <begin position="190"/>
        <end position="203"/>
    </location>
</feature>
<feature type="compositionally biased region" description="Acidic residues" evidence="2">
    <location>
        <begin position="213"/>
        <end position="223"/>
    </location>
</feature>
<feature type="binding site" evidence="1">
    <location>
        <position position="242"/>
    </location>
    <ligand>
        <name>[2Fe-2S] cluster</name>
        <dbReference type="ChEBI" id="CHEBI:190135"/>
    </ligand>
</feature>
<feature type="binding site" evidence="1">
    <location>
        <position position="253"/>
    </location>
    <ligand>
        <name>[2Fe-2S] cluster</name>
        <dbReference type="ChEBI" id="CHEBI:190135"/>
    </ligand>
</feature>
<feature type="binding site" evidence="1">
    <location>
        <position position="256"/>
    </location>
    <ligand>
        <name>[2Fe-2S] cluster</name>
        <dbReference type="ChEBI" id="CHEBI:190135"/>
    </ligand>
</feature>
<feature type="binding site" evidence="1">
    <location>
        <position position="258"/>
    </location>
    <ligand>
        <name>[2Fe-2S] cluster</name>
        <dbReference type="ChEBI" id="CHEBI:190135"/>
    </ligand>
</feature>
<feature type="binding site" evidence="1">
    <location>
        <position position="301"/>
    </location>
    <ligand>
        <name>[4Fe-4S] cluster</name>
        <dbReference type="ChEBI" id="CHEBI:49883"/>
    </ligand>
</feature>
<feature type="binding site" evidence="1">
    <location>
        <position position="304"/>
    </location>
    <ligand>
        <name>[4Fe-4S] cluster</name>
        <dbReference type="ChEBI" id="CHEBI:49883"/>
    </ligand>
</feature>
<feature type="binding site" evidence="1">
    <location>
        <position position="312"/>
    </location>
    <ligand>
        <name>[4Fe-4S] cluster</name>
        <dbReference type="ChEBI" id="CHEBI:49883"/>
    </ligand>
</feature>
<feature type="binding site" evidence="1">
    <location>
        <position position="315"/>
    </location>
    <ligand>
        <name>[4Fe-4S] cluster</name>
        <dbReference type="ChEBI" id="CHEBI:49883"/>
    </ligand>
</feature>
<name>DRE2_CANGA</name>
<protein>
    <recommendedName>
        <fullName evidence="1">Fe-S cluster assembly protein DRE2</fullName>
    </recommendedName>
    <alternativeName>
        <fullName evidence="1">Anamorsin homolog</fullName>
    </alternativeName>
</protein>